<sequence>MKILLANPRGFCAGVSRAVETVEKVLEVEKSPVYVRHEVVHNKVVVDSLKKKGVVFVKEVDEVPDDAVCIFSAHGVSLKVEEAAAKKNLVLYDATCPLVTKVHRGVRLASNNDAECILIGHKGHPEVQGTMGQYRSKKGAIYLIESEEDLNKLTIKDPDNLYYATQTTLSVDETQGIIQALKDKYPNIKGPKKEDICYATQNRQTAIKAMLKHIDVLVVVGSQNSSNSNRLKELATLEGIDAYLVDNPKDVDKLWFDNKKVCGVSAGASAPEYLVQQIISQISKVCSTEVEEFEGIKEEVYFPLPRLLKQKIGTGKVE</sequence>
<reference key="1">
    <citation type="journal article" date="2005" name="Nat. Genet.">
        <title>The complete genome sequence of Francisella tularensis, the causative agent of tularemia.</title>
        <authorList>
            <person name="Larsson P."/>
            <person name="Oyston P.C.F."/>
            <person name="Chain P."/>
            <person name="Chu M.C."/>
            <person name="Duffield M."/>
            <person name="Fuxelius H.-H."/>
            <person name="Garcia E."/>
            <person name="Haelltorp G."/>
            <person name="Johansson D."/>
            <person name="Isherwood K.E."/>
            <person name="Karp P.D."/>
            <person name="Larsson E."/>
            <person name="Liu Y."/>
            <person name="Michell S."/>
            <person name="Prior J."/>
            <person name="Prior R."/>
            <person name="Malfatti S."/>
            <person name="Sjoestedt A."/>
            <person name="Svensson K."/>
            <person name="Thompson N."/>
            <person name="Vergez L."/>
            <person name="Wagg J.K."/>
            <person name="Wren B.W."/>
            <person name="Lindler L.E."/>
            <person name="Andersson S.G.E."/>
            <person name="Forsman M."/>
            <person name="Titball R.W."/>
        </authorList>
    </citation>
    <scope>NUCLEOTIDE SEQUENCE [LARGE SCALE GENOMIC DNA]</scope>
    <source>
        <strain>SCHU S4 / Schu 4</strain>
    </source>
</reference>
<keyword id="KW-0004">4Fe-4S</keyword>
<keyword id="KW-0408">Iron</keyword>
<keyword id="KW-0411">Iron-sulfur</keyword>
<keyword id="KW-0414">Isoprene biosynthesis</keyword>
<keyword id="KW-0479">Metal-binding</keyword>
<keyword id="KW-0560">Oxidoreductase</keyword>
<keyword id="KW-1185">Reference proteome</keyword>
<comment type="function">
    <text evidence="1">Catalyzes the conversion of 1-hydroxy-2-methyl-2-(E)-butenyl 4-diphosphate (HMBPP) into a mixture of isopentenyl diphosphate (IPP) and dimethylallyl diphosphate (DMAPP). Acts in the terminal step of the DOXP/MEP pathway for isoprenoid precursor biosynthesis.</text>
</comment>
<comment type="catalytic activity">
    <reaction evidence="1">
        <text>isopentenyl diphosphate + 2 oxidized [2Fe-2S]-[ferredoxin] + H2O = (2E)-4-hydroxy-3-methylbut-2-enyl diphosphate + 2 reduced [2Fe-2S]-[ferredoxin] + 2 H(+)</text>
        <dbReference type="Rhea" id="RHEA:24488"/>
        <dbReference type="Rhea" id="RHEA-COMP:10000"/>
        <dbReference type="Rhea" id="RHEA-COMP:10001"/>
        <dbReference type="ChEBI" id="CHEBI:15377"/>
        <dbReference type="ChEBI" id="CHEBI:15378"/>
        <dbReference type="ChEBI" id="CHEBI:33737"/>
        <dbReference type="ChEBI" id="CHEBI:33738"/>
        <dbReference type="ChEBI" id="CHEBI:128753"/>
        <dbReference type="ChEBI" id="CHEBI:128769"/>
        <dbReference type="EC" id="1.17.7.4"/>
    </reaction>
</comment>
<comment type="catalytic activity">
    <reaction evidence="1">
        <text>dimethylallyl diphosphate + 2 oxidized [2Fe-2S]-[ferredoxin] + H2O = (2E)-4-hydroxy-3-methylbut-2-enyl diphosphate + 2 reduced [2Fe-2S]-[ferredoxin] + 2 H(+)</text>
        <dbReference type="Rhea" id="RHEA:24825"/>
        <dbReference type="Rhea" id="RHEA-COMP:10000"/>
        <dbReference type="Rhea" id="RHEA-COMP:10001"/>
        <dbReference type="ChEBI" id="CHEBI:15377"/>
        <dbReference type="ChEBI" id="CHEBI:15378"/>
        <dbReference type="ChEBI" id="CHEBI:33737"/>
        <dbReference type="ChEBI" id="CHEBI:33738"/>
        <dbReference type="ChEBI" id="CHEBI:57623"/>
        <dbReference type="ChEBI" id="CHEBI:128753"/>
        <dbReference type="EC" id="1.17.7.4"/>
    </reaction>
</comment>
<comment type="cofactor">
    <cofactor evidence="1">
        <name>[4Fe-4S] cluster</name>
        <dbReference type="ChEBI" id="CHEBI:49883"/>
    </cofactor>
    <text evidence="1">Binds 1 [4Fe-4S] cluster per subunit.</text>
</comment>
<comment type="pathway">
    <text evidence="1">Isoprenoid biosynthesis; dimethylallyl diphosphate biosynthesis; dimethylallyl diphosphate from (2E)-4-hydroxy-3-methylbutenyl diphosphate: step 1/1.</text>
</comment>
<comment type="pathway">
    <text evidence="1">Isoprenoid biosynthesis; isopentenyl diphosphate biosynthesis via DXP pathway; isopentenyl diphosphate from 1-deoxy-D-xylulose 5-phosphate: step 6/6.</text>
</comment>
<comment type="similarity">
    <text evidence="1">Belongs to the IspH family.</text>
</comment>
<name>ISPH_FRATT</name>
<protein>
    <recommendedName>
        <fullName evidence="1">4-hydroxy-3-methylbut-2-enyl diphosphate reductase</fullName>
        <shortName evidence="1">HMBPP reductase</shortName>
        <ecNumber evidence="1">1.17.7.4</ecNumber>
    </recommendedName>
</protein>
<proteinExistence type="inferred from homology"/>
<dbReference type="EC" id="1.17.7.4" evidence="1"/>
<dbReference type="EMBL" id="AJ749949">
    <property type="protein sequence ID" value="CAG45466.1"/>
    <property type="molecule type" value="Genomic_DNA"/>
</dbReference>
<dbReference type="RefSeq" id="WP_003020788.1">
    <property type="nucleotide sequence ID" value="NZ_CP010290.1"/>
</dbReference>
<dbReference type="RefSeq" id="YP_169838.1">
    <property type="nucleotide sequence ID" value="NC_006570.2"/>
</dbReference>
<dbReference type="SMR" id="Q5NGK4"/>
<dbReference type="STRING" id="177416.FTT_0833"/>
<dbReference type="DNASU" id="3190808"/>
<dbReference type="EnsemblBacteria" id="CAG45466">
    <property type="protein sequence ID" value="CAG45466"/>
    <property type="gene ID" value="FTT_0833"/>
</dbReference>
<dbReference type="KEGG" id="ftu:FTT_0833"/>
<dbReference type="eggNOG" id="COG0761">
    <property type="taxonomic scope" value="Bacteria"/>
</dbReference>
<dbReference type="OrthoDB" id="9804068at2"/>
<dbReference type="UniPathway" id="UPA00056">
    <property type="reaction ID" value="UER00097"/>
</dbReference>
<dbReference type="UniPathway" id="UPA00059">
    <property type="reaction ID" value="UER00105"/>
</dbReference>
<dbReference type="Proteomes" id="UP000001174">
    <property type="component" value="Chromosome"/>
</dbReference>
<dbReference type="GO" id="GO:0051539">
    <property type="term" value="F:4 iron, 4 sulfur cluster binding"/>
    <property type="evidence" value="ECO:0007669"/>
    <property type="project" value="UniProtKB-UniRule"/>
</dbReference>
<dbReference type="GO" id="GO:0051745">
    <property type="term" value="F:4-hydroxy-3-methylbut-2-enyl diphosphate reductase activity"/>
    <property type="evidence" value="ECO:0007669"/>
    <property type="project" value="UniProtKB-UniRule"/>
</dbReference>
<dbReference type="GO" id="GO:0046872">
    <property type="term" value="F:metal ion binding"/>
    <property type="evidence" value="ECO:0007669"/>
    <property type="project" value="UniProtKB-KW"/>
</dbReference>
<dbReference type="GO" id="GO:0050992">
    <property type="term" value="P:dimethylallyl diphosphate biosynthetic process"/>
    <property type="evidence" value="ECO:0007669"/>
    <property type="project" value="UniProtKB-UniRule"/>
</dbReference>
<dbReference type="GO" id="GO:0019288">
    <property type="term" value="P:isopentenyl diphosphate biosynthetic process, methylerythritol 4-phosphate pathway"/>
    <property type="evidence" value="ECO:0007669"/>
    <property type="project" value="UniProtKB-UniRule"/>
</dbReference>
<dbReference type="GO" id="GO:0016114">
    <property type="term" value="P:terpenoid biosynthetic process"/>
    <property type="evidence" value="ECO:0007669"/>
    <property type="project" value="UniProtKB-UniRule"/>
</dbReference>
<dbReference type="CDD" id="cd13944">
    <property type="entry name" value="lytB_ispH"/>
    <property type="match status" value="1"/>
</dbReference>
<dbReference type="Gene3D" id="3.40.50.11270">
    <property type="match status" value="1"/>
</dbReference>
<dbReference type="Gene3D" id="3.40.1010.20">
    <property type="entry name" value="4-hydroxy-3-methylbut-2-enyl diphosphate reductase, catalytic domain"/>
    <property type="match status" value="2"/>
</dbReference>
<dbReference type="HAMAP" id="MF_00191">
    <property type="entry name" value="IspH"/>
    <property type="match status" value="1"/>
</dbReference>
<dbReference type="InterPro" id="IPR003451">
    <property type="entry name" value="LytB/IspH"/>
</dbReference>
<dbReference type="NCBIfam" id="TIGR00216">
    <property type="entry name" value="ispH_lytB"/>
    <property type="match status" value="1"/>
</dbReference>
<dbReference type="NCBIfam" id="NF002188">
    <property type="entry name" value="PRK01045.1-2"/>
    <property type="match status" value="1"/>
</dbReference>
<dbReference type="NCBIfam" id="NF002190">
    <property type="entry name" value="PRK01045.1-4"/>
    <property type="match status" value="1"/>
</dbReference>
<dbReference type="PANTHER" id="PTHR30426">
    <property type="entry name" value="4-HYDROXY-3-METHYLBUT-2-ENYL DIPHOSPHATE REDUCTASE"/>
    <property type="match status" value="1"/>
</dbReference>
<dbReference type="PANTHER" id="PTHR30426:SF0">
    <property type="entry name" value="4-HYDROXY-3-METHYLBUT-2-ENYL DIPHOSPHATE REDUCTASE"/>
    <property type="match status" value="1"/>
</dbReference>
<dbReference type="Pfam" id="PF02401">
    <property type="entry name" value="LYTB"/>
    <property type="match status" value="1"/>
</dbReference>
<gene>
    <name evidence="1" type="primary">ispH</name>
    <name type="ordered locus">FTT_0833</name>
</gene>
<evidence type="ECO:0000255" key="1">
    <source>
        <dbReference type="HAMAP-Rule" id="MF_00191"/>
    </source>
</evidence>
<organism>
    <name type="scientific">Francisella tularensis subsp. tularensis (strain SCHU S4 / Schu 4)</name>
    <dbReference type="NCBI Taxonomy" id="177416"/>
    <lineage>
        <taxon>Bacteria</taxon>
        <taxon>Pseudomonadati</taxon>
        <taxon>Pseudomonadota</taxon>
        <taxon>Gammaproteobacteria</taxon>
        <taxon>Thiotrichales</taxon>
        <taxon>Francisellaceae</taxon>
        <taxon>Francisella</taxon>
    </lineage>
</organism>
<feature type="chain" id="PRO_0000128818" description="4-hydroxy-3-methylbut-2-enyl diphosphate reductase">
    <location>
        <begin position="1"/>
        <end position="318"/>
    </location>
</feature>
<feature type="active site" description="Proton donor" evidence="1">
    <location>
        <position position="126"/>
    </location>
</feature>
<feature type="binding site" evidence="1">
    <location>
        <position position="12"/>
    </location>
    <ligand>
        <name>[4Fe-4S] cluster</name>
        <dbReference type="ChEBI" id="CHEBI:49883"/>
    </ligand>
</feature>
<feature type="binding site" evidence="1">
    <location>
        <position position="41"/>
    </location>
    <ligand>
        <name>(2E)-4-hydroxy-3-methylbut-2-enyl diphosphate</name>
        <dbReference type="ChEBI" id="CHEBI:128753"/>
    </ligand>
</feature>
<feature type="binding site" evidence="1">
    <location>
        <position position="41"/>
    </location>
    <ligand>
        <name>dimethylallyl diphosphate</name>
        <dbReference type="ChEBI" id="CHEBI:57623"/>
    </ligand>
</feature>
<feature type="binding site" evidence="1">
    <location>
        <position position="41"/>
    </location>
    <ligand>
        <name>isopentenyl diphosphate</name>
        <dbReference type="ChEBI" id="CHEBI:128769"/>
    </ligand>
</feature>
<feature type="binding site" evidence="1">
    <location>
        <position position="74"/>
    </location>
    <ligand>
        <name>(2E)-4-hydroxy-3-methylbut-2-enyl diphosphate</name>
        <dbReference type="ChEBI" id="CHEBI:128753"/>
    </ligand>
</feature>
<feature type="binding site" evidence="1">
    <location>
        <position position="74"/>
    </location>
    <ligand>
        <name>dimethylallyl diphosphate</name>
        <dbReference type="ChEBI" id="CHEBI:57623"/>
    </ligand>
</feature>
<feature type="binding site" evidence="1">
    <location>
        <position position="74"/>
    </location>
    <ligand>
        <name>isopentenyl diphosphate</name>
        <dbReference type="ChEBI" id="CHEBI:128769"/>
    </ligand>
</feature>
<feature type="binding site" evidence="1">
    <location>
        <position position="96"/>
    </location>
    <ligand>
        <name>[4Fe-4S] cluster</name>
        <dbReference type="ChEBI" id="CHEBI:49883"/>
    </ligand>
</feature>
<feature type="binding site" evidence="1">
    <location>
        <position position="124"/>
    </location>
    <ligand>
        <name>(2E)-4-hydroxy-3-methylbut-2-enyl diphosphate</name>
        <dbReference type="ChEBI" id="CHEBI:128753"/>
    </ligand>
</feature>
<feature type="binding site" evidence="1">
    <location>
        <position position="124"/>
    </location>
    <ligand>
        <name>dimethylallyl diphosphate</name>
        <dbReference type="ChEBI" id="CHEBI:57623"/>
    </ligand>
</feature>
<feature type="binding site" evidence="1">
    <location>
        <position position="124"/>
    </location>
    <ligand>
        <name>isopentenyl diphosphate</name>
        <dbReference type="ChEBI" id="CHEBI:128769"/>
    </ligand>
</feature>
<feature type="binding site" evidence="1">
    <location>
        <position position="167"/>
    </location>
    <ligand>
        <name>(2E)-4-hydroxy-3-methylbut-2-enyl diphosphate</name>
        <dbReference type="ChEBI" id="CHEBI:128753"/>
    </ligand>
</feature>
<feature type="binding site" evidence="1">
    <location>
        <position position="197"/>
    </location>
    <ligand>
        <name>[4Fe-4S] cluster</name>
        <dbReference type="ChEBI" id="CHEBI:49883"/>
    </ligand>
</feature>
<feature type="binding site" evidence="1">
    <location>
        <position position="225"/>
    </location>
    <ligand>
        <name>(2E)-4-hydroxy-3-methylbut-2-enyl diphosphate</name>
        <dbReference type="ChEBI" id="CHEBI:128753"/>
    </ligand>
</feature>
<feature type="binding site" evidence="1">
    <location>
        <position position="225"/>
    </location>
    <ligand>
        <name>dimethylallyl diphosphate</name>
        <dbReference type="ChEBI" id="CHEBI:57623"/>
    </ligand>
</feature>
<feature type="binding site" evidence="1">
    <location>
        <position position="225"/>
    </location>
    <ligand>
        <name>isopentenyl diphosphate</name>
        <dbReference type="ChEBI" id="CHEBI:128769"/>
    </ligand>
</feature>
<feature type="binding site" evidence="1">
    <location>
        <position position="226"/>
    </location>
    <ligand>
        <name>(2E)-4-hydroxy-3-methylbut-2-enyl diphosphate</name>
        <dbReference type="ChEBI" id="CHEBI:128753"/>
    </ligand>
</feature>
<feature type="binding site" evidence="1">
    <location>
        <position position="226"/>
    </location>
    <ligand>
        <name>dimethylallyl diphosphate</name>
        <dbReference type="ChEBI" id="CHEBI:57623"/>
    </ligand>
</feature>
<feature type="binding site" evidence="1">
    <location>
        <position position="226"/>
    </location>
    <ligand>
        <name>isopentenyl diphosphate</name>
        <dbReference type="ChEBI" id="CHEBI:128769"/>
    </ligand>
</feature>
<feature type="binding site" evidence="1">
    <location>
        <position position="227"/>
    </location>
    <ligand>
        <name>(2E)-4-hydroxy-3-methylbut-2-enyl diphosphate</name>
        <dbReference type="ChEBI" id="CHEBI:128753"/>
    </ligand>
</feature>
<feature type="binding site" evidence="1">
    <location>
        <position position="227"/>
    </location>
    <ligand>
        <name>dimethylallyl diphosphate</name>
        <dbReference type="ChEBI" id="CHEBI:57623"/>
    </ligand>
</feature>
<feature type="binding site" evidence="1">
    <location>
        <position position="227"/>
    </location>
    <ligand>
        <name>isopentenyl diphosphate</name>
        <dbReference type="ChEBI" id="CHEBI:128769"/>
    </ligand>
</feature>
<feature type="binding site" evidence="1">
    <location>
        <position position="269"/>
    </location>
    <ligand>
        <name>(2E)-4-hydroxy-3-methylbut-2-enyl diphosphate</name>
        <dbReference type="ChEBI" id="CHEBI:128753"/>
    </ligand>
</feature>
<feature type="binding site" evidence="1">
    <location>
        <position position="269"/>
    </location>
    <ligand>
        <name>dimethylallyl diphosphate</name>
        <dbReference type="ChEBI" id="CHEBI:57623"/>
    </ligand>
</feature>
<feature type="binding site" evidence="1">
    <location>
        <position position="269"/>
    </location>
    <ligand>
        <name>isopentenyl diphosphate</name>
        <dbReference type="ChEBI" id="CHEBI:128769"/>
    </ligand>
</feature>
<accession>Q5NGK4</accession>